<feature type="chain" id="PRO_1000045601" description="Glycine dehydrogenase (decarboxylating)">
    <location>
        <begin position="1"/>
        <end position="961"/>
    </location>
</feature>
<feature type="modified residue" description="N6-(pyridoxal phosphate)lysine" evidence="1">
    <location>
        <position position="702"/>
    </location>
</feature>
<proteinExistence type="inferred from homology"/>
<gene>
    <name evidence="1" type="primary">gcvP</name>
    <name type="ordered locus">RPE_1595</name>
</gene>
<accession>Q07R90</accession>
<reference key="1">
    <citation type="submission" date="2006-09" db="EMBL/GenBank/DDBJ databases">
        <title>Complete sequence of Rhodopseudomonas palustris BisA53.</title>
        <authorList>
            <consortium name="US DOE Joint Genome Institute"/>
            <person name="Copeland A."/>
            <person name="Lucas S."/>
            <person name="Lapidus A."/>
            <person name="Barry K."/>
            <person name="Detter J.C."/>
            <person name="Glavina del Rio T."/>
            <person name="Hammon N."/>
            <person name="Israni S."/>
            <person name="Dalin E."/>
            <person name="Tice H."/>
            <person name="Pitluck S."/>
            <person name="Chain P."/>
            <person name="Malfatti S."/>
            <person name="Shin M."/>
            <person name="Vergez L."/>
            <person name="Schmutz J."/>
            <person name="Larimer F."/>
            <person name="Land M."/>
            <person name="Hauser L."/>
            <person name="Pelletier D.A."/>
            <person name="Kyrpides N."/>
            <person name="Kim E."/>
            <person name="Harwood C.S."/>
            <person name="Oda Y."/>
            <person name="Richardson P."/>
        </authorList>
    </citation>
    <scope>NUCLEOTIDE SEQUENCE [LARGE SCALE GENOMIC DNA]</scope>
    <source>
        <strain>BisA53</strain>
    </source>
</reference>
<evidence type="ECO:0000255" key="1">
    <source>
        <dbReference type="HAMAP-Rule" id="MF_00711"/>
    </source>
</evidence>
<comment type="function">
    <text evidence="1">The glycine cleavage system catalyzes the degradation of glycine. The P protein binds the alpha-amino group of glycine through its pyridoxal phosphate cofactor; CO(2) is released and the remaining methylamine moiety is then transferred to the lipoamide cofactor of the H protein.</text>
</comment>
<comment type="catalytic activity">
    <reaction evidence="1">
        <text>N(6)-[(R)-lipoyl]-L-lysyl-[glycine-cleavage complex H protein] + glycine + H(+) = N(6)-[(R)-S(8)-aminomethyldihydrolipoyl]-L-lysyl-[glycine-cleavage complex H protein] + CO2</text>
        <dbReference type="Rhea" id="RHEA:24304"/>
        <dbReference type="Rhea" id="RHEA-COMP:10494"/>
        <dbReference type="Rhea" id="RHEA-COMP:10495"/>
        <dbReference type="ChEBI" id="CHEBI:15378"/>
        <dbReference type="ChEBI" id="CHEBI:16526"/>
        <dbReference type="ChEBI" id="CHEBI:57305"/>
        <dbReference type="ChEBI" id="CHEBI:83099"/>
        <dbReference type="ChEBI" id="CHEBI:83143"/>
        <dbReference type="EC" id="1.4.4.2"/>
    </reaction>
</comment>
<comment type="cofactor">
    <cofactor evidence="1">
        <name>pyridoxal 5'-phosphate</name>
        <dbReference type="ChEBI" id="CHEBI:597326"/>
    </cofactor>
</comment>
<comment type="subunit">
    <text evidence="1">The glycine cleavage system is composed of four proteins: P, T, L and H.</text>
</comment>
<comment type="similarity">
    <text evidence="1">Belongs to the GcvP family.</text>
</comment>
<protein>
    <recommendedName>
        <fullName evidence="1">Glycine dehydrogenase (decarboxylating)</fullName>
        <ecNumber evidence="1">1.4.4.2</ecNumber>
    </recommendedName>
    <alternativeName>
        <fullName evidence="1">Glycine cleavage system P-protein</fullName>
    </alternativeName>
    <alternativeName>
        <fullName evidence="1">Glycine decarboxylase</fullName>
    </alternativeName>
    <alternativeName>
        <fullName evidence="1">Glycine dehydrogenase (aminomethyl-transferring)</fullName>
    </alternativeName>
</protein>
<name>GCSP_RHOP5</name>
<keyword id="KW-0560">Oxidoreductase</keyword>
<keyword id="KW-0663">Pyridoxal phosphate</keyword>
<sequence length="961" mass="103714">MPVSRSPIEDLANGFARRHIGPSPQEIAAMLRAVGAPSLDALMGETLPAAIRQAKPLDLGPALSEPEALAHMAELAAKNQVFTSLIGQGYYGTAMPTVIQRNILENPAWYTAYTPYQPEISQGRLEALFNFQTMICDLTGLDVANASLLDEGTAAAEAMALAERAMPKKTKAFFVDRDTHPQTLAVLRTRAEPLGWQIIVGDPVSDLQKADVFGALLQYPGSSGALRDPRPMIAALHAKGGLAVIAADLLALTLLASPGDLGADIAIGSAQRFGVPMGYGGPHAGFMAVRDSLKRALPGRIVGQSIDSHGQPAYRLALQTREQHIRREKATSNICTAQVLLAVLASMYAVYHGPEGLSAIARSIHRKTAVLAAGLRKLGFTTRNEAFFDTITVDVGDKQSEIIARARDENINLRIGDGTLGLSLDETTTPKIVEAVWRAFGGALSYAEIEPAMRDALHPTLKRTSPFMTQEVFHLYRSETELLRYMRKLSDRDLALDRAMIPLGSCTMKLNATTEMMPLSLPGFAHLHPFAPPEQALGYHALFDKLETWLAEITGYDAVSLQPNSGAQGEYAGLLAIRGYYKSRGEPHRKICLIPSSAHGTNPASAAMAGMEVVVVECNDRGDVDVDDLRARAELHSPNLAAVMITYPSTHGVFEEHIRDICDIVHAHGGQVYLDGANLNAQVGLARPGEYGADVSHINLHKTFAIPHGGGGPGMGPIGVKAHLAPFLPGHPCCDDTGPDGFSHGGGTVAAAPWGSASVLTISYVYILLMGGDGLKRATEVAILNANYVAAKLDPHFPVLYKNERGRVAHECIVDPRALKNSSGVTVDDIAKRLIDYGFHAPTMSFPVVGTLMIEPTESESKAELDRFCDAMIAIRREIAEIETGRWKVEQSPLRFAPHTVHDLAEDHWHRPYSRAIGCFPAGTARHDKYWCPVGRIDNVYGDRNLVCSCPPIEDYALAAE</sequence>
<dbReference type="EC" id="1.4.4.2" evidence="1"/>
<dbReference type="EMBL" id="CP000463">
    <property type="protein sequence ID" value="ABJ05544.1"/>
    <property type="molecule type" value="Genomic_DNA"/>
</dbReference>
<dbReference type="SMR" id="Q07R90"/>
<dbReference type="STRING" id="316055.RPE_1595"/>
<dbReference type="KEGG" id="rpe:RPE_1595"/>
<dbReference type="eggNOG" id="COG0403">
    <property type="taxonomic scope" value="Bacteria"/>
</dbReference>
<dbReference type="eggNOG" id="COG1003">
    <property type="taxonomic scope" value="Bacteria"/>
</dbReference>
<dbReference type="HOGENOM" id="CLU_004620_1_1_5"/>
<dbReference type="OrthoDB" id="9801272at2"/>
<dbReference type="GO" id="GO:0005829">
    <property type="term" value="C:cytosol"/>
    <property type="evidence" value="ECO:0007669"/>
    <property type="project" value="TreeGrafter"/>
</dbReference>
<dbReference type="GO" id="GO:0005960">
    <property type="term" value="C:glycine cleavage complex"/>
    <property type="evidence" value="ECO:0007669"/>
    <property type="project" value="TreeGrafter"/>
</dbReference>
<dbReference type="GO" id="GO:0016594">
    <property type="term" value="F:glycine binding"/>
    <property type="evidence" value="ECO:0007669"/>
    <property type="project" value="TreeGrafter"/>
</dbReference>
<dbReference type="GO" id="GO:0004375">
    <property type="term" value="F:glycine dehydrogenase (decarboxylating) activity"/>
    <property type="evidence" value="ECO:0007669"/>
    <property type="project" value="UniProtKB-EC"/>
</dbReference>
<dbReference type="GO" id="GO:0030170">
    <property type="term" value="F:pyridoxal phosphate binding"/>
    <property type="evidence" value="ECO:0007669"/>
    <property type="project" value="TreeGrafter"/>
</dbReference>
<dbReference type="GO" id="GO:0019464">
    <property type="term" value="P:glycine decarboxylation via glycine cleavage system"/>
    <property type="evidence" value="ECO:0007669"/>
    <property type="project" value="UniProtKB-UniRule"/>
</dbReference>
<dbReference type="CDD" id="cd00613">
    <property type="entry name" value="GDC-P"/>
    <property type="match status" value="2"/>
</dbReference>
<dbReference type="FunFam" id="3.40.640.10:FF:000005">
    <property type="entry name" value="Glycine dehydrogenase (decarboxylating), mitochondrial"/>
    <property type="match status" value="1"/>
</dbReference>
<dbReference type="FunFam" id="3.90.1150.10:FF:000007">
    <property type="entry name" value="Glycine dehydrogenase (decarboxylating), mitochondrial"/>
    <property type="match status" value="1"/>
</dbReference>
<dbReference type="FunFam" id="3.40.640.10:FF:000007">
    <property type="entry name" value="glycine dehydrogenase (Decarboxylating), mitochondrial"/>
    <property type="match status" value="1"/>
</dbReference>
<dbReference type="Gene3D" id="3.90.1150.10">
    <property type="entry name" value="Aspartate Aminotransferase, domain 1"/>
    <property type="match status" value="2"/>
</dbReference>
<dbReference type="Gene3D" id="3.40.640.10">
    <property type="entry name" value="Type I PLP-dependent aspartate aminotransferase-like (Major domain)"/>
    <property type="match status" value="2"/>
</dbReference>
<dbReference type="HAMAP" id="MF_00711">
    <property type="entry name" value="GcvP"/>
    <property type="match status" value="1"/>
</dbReference>
<dbReference type="InterPro" id="IPR003437">
    <property type="entry name" value="GcvP"/>
</dbReference>
<dbReference type="InterPro" id="IPR049316">
    <property type="entry name" value="GDC-P_C"/>
</dbReference>
<dbReference type="InterPro" id="IPR049315">
    <property type="entry name" value="GDC-P_N"/>
</dbReference>
<dbReference type="InterPro" id="IPR020581">
    <property type="entry name" value="GDC_P"/>
</dbReference>
<dbReference type="InterPro" id="IPR015424">
    <property type="entry name" value="PyrdxlP-dep_Trfase"/>
</dbReference>
<dbReference type="InterPro" id="IPR015421">
    <property type="entry name" value="PyrdxlP-dep_Trfase_major"/>
</dbReference>
<dbReference type="InterPro" id="IPR015422">
    <property type="entry name" value="PyrdxlP-dep_Trfase_small"/>
</dbReference>
<dbReference type="NCBIfam" id="TIGR00461">
    <property type="entry name" value="gcvP"/>
    <property type="match status" value="1"/>
</dbReference>
<dbReference type="NCBIfam" id="NF001696">
    <property type="entry name" value="PRK00451.1"/>
    <property type="match status" value="1"/>
</dbReference>
<dbReference type="NCBIfam" id="NF003346">
    <property type="entry name" value="PRK04366.1"/>
    <property type="match status" value="1"/>
</dbReference>
<dbReference type="PANTHER" id="PTHR11773:SF1">
    <property type="entry name" value="GLYCINE DEHYDROGENASE (DECARBOXYLATING), MITOCHONDRIAL"/>
    <property type="match status" value="1"/>
</dbReference>
<dbReference type="PANTHER" id="PTHR11773">
    <property type="entry name" value="GLYCINE DEHYDROGENASE, DECARBOXYLATING"/>
    <property type="match status" value="1"/>
</dbReference>
<dbReference type="Pfam" id="PF21478">
    <property type="entry name" value="GcvP2_C"/>
    <property type="match status" value="1"/>
</dbReference>
<dbReference type="Pfam" id="PF02347">
    <property type="entry name" value="GDC-P"/>
    <property type="match status" value="2"/>
</dbReference>
<dbReference type="SUPFAM" id="SSF53383">
    <property type="entry name" value="PLP-dependent transferases"/>
    <property type="match status" value="2"/>
</dbReference>
<organism>
    <name type="scientific">Rhodopseudomonas palustris (strain BisA53)</name>
    <dbReference type="NCBI Taxonomy" id="316055"/>
    <lineage>
        <taxon>Bacteria</taxon>
        <taxon>Pseudomonadati</taxon>
        <taxon>Pseudomonadota</taxon>
        <taxon>Alphaproteobacteria</taxon>
        <taxon>Hyphomicrobiales</taxon>
        <taxon>Nitrobacteraceae</taxon>
        <taxon>Rhodopseudomonas</taxon>
    </lineage>
</organism>